<organism>
    <name type="scientific">Chlamydia muridarum (strain MoPn / Nigg)</name>
    <dbReference type="NCBI Taxonomy" id="243161"/>
    <lineage>
        <taxon>Bacteria</taxon>
        <taxon>Pseudomonadati</taxon>
        <taxon>Chlamydiota</taxon>
        <taxon>Chlamydiia</taxon>
        <taxon>Chlamydiales</taxon>
        <taxon>Chlamydiaceae</taxon>
        <taxon>Chlamydia/Chlamydophila group</taxon>
        <taxon>Chlamydia</taxon>
    </lineage>
</organism>
<name>Y791_CHLMU</name>
<accession>Q9PJN7</accession>
<comment type="similarity">
    <text evidence="2">Belongs to the chlamydial CPn_0623/CT_504/TC_0791 family.</text>
</comment>
<protein>
    <recommendedName>
        <fullName>Uncharacterized protein TC_0791</fullName>
    </recommendedName>
</protein>
<dbReference type="EMBL" id="AE002160">
    <property type="protein sequence ID" value="AAF39594.1"/>
    <property type="molecule type" value="Genomic_DNA"/>
</dbReference>
<dbReference type="PIR" id="G81662">
    <property type="entry name" value="G81662"/>
</dbReference>
<dbReference type="SMR" id="Q9PJN7"/>
<dbReference type="GeneID" id="1246158"/>
<dbReference type="KEGG" id="cmu:TC_0791"/>
<dbReference type="HOGENOM" id="CLU_060729_0_0_0"/>
<dbReference type="OrthoDB" id="19154at2"/>
<dbReference type="Proteomes" id="UP000000800">
    <property type="component" value="Chromosome"/>
</dbReference>
<dbReference type="InterPro" id="IPR054977">
    <property type="entry name" value="GrgA_tf"/>
</dbReference>
<dbReference type="NCBIfam" id="NF045799">
    <property type="entry name" value="GrgA"/>
    <property type="match status" value="1"/>
</dbReference>
<proteinExistence type="inferred from homology"/>
<gene>
    <name type="ordered locus">TC_0791</name>
</gene>
<sequence>MYFTRDPVIETVITSREGYKLSIRNSKHLSQDPFVVEAVEVIRLGGTSFFRNCDHSKPFLVPAADYEVMEVRDAKINLKAVGLDRGVKIVSGREALLKMPRVAPVASVQEESSSSLEEGIIEDPVVATPSPASAAPMSKKEKRKEFKNEKWKEKKKQGRRRNSKEIADAVGSSQDMIDTITEECLQESSPEERDPCERRFALIPPPTRLISEGPEEPKESQPVTAVDLNESLNALVSESCDVIESILADEDTVIFTKESEKSSNETQELSSHSLEEASVHDRISSEE</sequence>
<evidence type="ECO:0000256" key="1">
    <source>
        <dbReference type="SAM" id="MobiDB-lite"/>
    </source>
</evidence>
<evidence type="ECO:0000305" key="2"/>
<feature type="chain" id="PRO_0000218403" description="Uncharacterized protein TC_0791">
    <location>
        <begin position="1"/>
        <end position="287"/>
    </location>
</feature>
<feature type="region of interest" description="Disordered" evidence="1">
    <location>
        <begin position="109"/>
        <end position="175"/>
    </location>
</feature>
<feature type="region of interest" description="Disordered" evidence="1">
    <location>
        <begin position="203"/>
        <end position="223"/>
    </location>
</feature>
<feature type="region of interest" description="Disordered" evidence="1">
    <location>
        <begin position="257"/>
        <end position="287"/>
    </location>
</feature>
<feature type="compositionally biased region" description="Low complexity" evidence="1">
    <location>
        <begin position="110"/>
        <end position="136"/>
    </location>
</feature>
<feature type="compositionally biased region" description="Basic and acidic residues" evidence="1">
    <location>
        <begin position="143"/>
        <end position="152"/>
    </location>
</feature>
<feature type="compositionally biased region" description="Basic residues" evidence="1">
    <location>
        <begin position="153"/>
        <end position="162"/>
    </location>
</feature>
<feature type="compositionally biased region" description="Basic and acidic residues" evidence="1">
    <location>
        <begin position="273"/>
        <end position="287"/>
    </location>
</feature>
<reference key="1">
    <citation type="journal article" date="2000" name="Nucleic Acids Res.">
        <title>Genome sequences of Chlamydia trachomatis MoPn and Chlamydia pneumoniae AR39.</title>
        <authorList>
            <person name="Read T.D."/>
            <person name="Brunham R.C."/>
            <person name="Shen C."/>
            <person name="Gill S.R."/>
            <person name="Heidelberg J.F."/>
            <person name="White O."/>
            <person name="Hickey E.K."/>
            <person name="Peterson J.D."/>
            <person name="Utterback T.R."/>
            <person name="Berry K.J."/>
            <person name="Bass S."/>
            <person name="Linher K.D."/>
            <person name="Weidman J.F."/>
            <person name="Khouri H.M."/>
            <person name="Craven B."/>
            <person name="Bowman C."/>
            <person name="Dodson R.J."/>
            <person name="Gwinn M.L."/>
            <person name="Nelson W.C."/>
            <person name="DeBoy R.T."/>
            <person name="Kolonay J.F."/>
            <person name="McClarty G."/>
            <person name="Salzberg S.L."/>
            <person name="Eisen J.A."/>
            <person name="Fraser C.M."/>
        </authorList>
    </citation>
    <scope>NUCLEOTIDE SEQUENCE [LARGE SCALE GENOMIC DNA]</scope>
    <source>
        <strain>MoPn / Nigg</strain>
    </source>
</reference>